<accession>B3WA08</accession>
<keyword id="KW-0678">Repressor</keyword>
<keyword id="KW-0687">Ribonucleoprotein</keyword>
<keyword id="KW-0689">Ribosomal protein</keyword>
<keyword id="KW-0694">RNA-binding</keyword>
<keyword id="KW-0699">rRNA-binding</keyword>
<keyword id="KW-0810">Translation regulation</keyword>
<keyword id="KW-0820">tRNA-binding</keyword>
<comment type="function">
    <text evidence="1">Binds directly to 23S rRNA. The L1 stalk is quite mobile in the ribosome, and is involved in E site tRNA release.</text>
</comment>
<comment type="function">
    <text evidence="1">Protein L1 is also a translational repressor protein, it controls the translation of the L11 operon by binding to its mRNA.</text>
</comment>
<comment type="subunit">
    <text evidence="1">Part of the 50S ribosomal subunit.</text>
</comment>
<comment type="similarity">
    <text evidence="1">Belongs to the universal ribosomal protein uL1 family.</text>
</comment>
<gene>
    <name evidence="1" type="primary">rplA</name>
    <name type="ordered locus">LCABL_24610</name>
</gene>
<reference key="1">
    <citation type="submission" date="2008-06" db="EMBL/GenBank/DDBJ databases">
        <title>Lactobacillus casei BL23 complete genome sequence.</title>
        <authorList>
            <person name="Maze A."/>
            <person name="Boel G."/>
            <person name="Bourand A."/>
            <person name="Loux V."/>
            <person name="Gibrat J.F."/>
            <person name="Zuniga M."/>
            <person name="Hartke A."/>
            <person name="Deutscher J."/>
        </authorList>
    </citation>
    <scope>NUCLEOTIDE SEQUENCE [LARGE SCALE GENOMIC DNA]</scope>
    <source>
        <strain>BL23</strain>
    </source>
</reference>
<protein>
    <recommendedName>
        <fullName evidence="1">Large ribosomal subunit protein uL1</fullName>
    </recommendedName>
    <alternativeName>
        <fullName evidence="2">50S ribosomal protein L1</fullName>
    </alternativeName>
</protein>
<feature type="chain" id="PRO_1000141418" description="Large ribosomal subunit protein uL1">
    <location>
        <begin position="1"/>
        <end position="229"/>
    </location>
</feature>
<sequence>MAKKGKKYLEAAKAVDPTKQYTPEEAVDLLKKIDFAKFDETVEVAYRLNVDPKQADQQIRGAVVLPNGTGKTAKVIVFAQGDQAKAAEDAGADIVGAEDLVQKIQDGWLDFDVAVATPPMMAQVGRLGRVLGPKGLMPNPKTGTVTMDTAKAVKDIKAGQVAYRVDKAGIIHAPIGKKSFDADKLLENFKAMNDIVLKARPASTKGIYIKSLALTATMAPGIKVNPSDF</sequence>
<organism>
    <name type="scientific">Lacticaseibacillus casei (strain BL23)</name>
    <name type="common">Lactobacillus casei</name>
    <dbReference type="NCBI Taxonomy" id="543734"/>
    <lineage>
        <taxon>Bacteria</taxon>
        <taxon>Bacillati</taxon>
        <taxon>Bacillota</taxon>
        <taxon>Bacilli</taxon>
        <taxon>Lactobacillales</taxon>
        <taxon>Lactobacillaceae</taxon>
        <taxon>Lacticaseibacillus</taxon>
    </lineage>
</organism>
<dbReference type="EMBL" id="FM177140">
    <property type="protein sequence ID" value="CAQ67527.1"/>
    <property type="molecule type" value="Genomic_DNA"/>
</dbReference>
<dbReference type="SMR" id="B3WA08"/>
<dbReference type="KEGG" id="lcb:LCABL_24610"/>
<dbReference type="HOGENOM" id="CLU_062853_0_0_9"/>
<dbReference type="GO" id="GO:0015934">
    <property type="term" value="C:large ribosomal subunit"/>
    <property type="evidence" value="ECO:0007669"/>
    <property type="project" value="InterPro"/>
</dbReference>
<dbReference type="GO" id="GO:0019843">
    <property type="term" value="F:rRNA binding"/>
    <property type="evidence" value="ECO:0007669"/>
    <property type="project" value="UniProtKB-UniRule"/>
</dbReference>
<dbReference type="GO" id="GO:0003735">
    <property type="term" value="F:structural constituent of ribosome"/>
    <property type="evidence" value="ECO:0007669"/>
    <property type="project" value="InterPro"/>
</dbReference>
<dbReference type="GO" id="GO:0000049">
    <property type="term" value="F:tRNA binding"/>
    <property type="evidence" value="ECO:0007669"/>
    <property type="project" value="UniProtKB-KW"/>
</dbReference>
<dbReference type="GO" id="GO:0006417">
    <property type="term" value="P:regulation of translation"/>
    <property type="evidence" value="ECO:0007669"/>
    <property type="project" value="UniProtKB-KW"/>
</dbReference>
<dbReference type="GO" id="GO:0006412">
    <property type="term" value="P:translation"/>
    <property type="evidence" value="ECO:0007669"/>
    <property type="project" value="UniProtKB-UniRule"/>
</dbReference>
<dbReference type="CDD" id="cd00403">
    <property type="entry name" value="Ribosomal_L1"/>
    <property type="match status" value="1"/>
</dbReference>
<dbReference type="FunFam" id="3.40.50.790:FF:000001">
    <property type="entry name" value="50S ribosomal protein L1"/>
    <property type="match status" value="1"/>
</dbReference>
<dbReference type="Gene3D" id="3.30.190.20">
    <property type="match status" value="1"/>
</dbReference>
<dbReference type="Gene3D" id="3.40.50.790">
    <property type="match status" value="1"/>
</dbReference>
<dbReference type="HAMAP" id="MF_01318_B">
    <property type="entry name" value="Ribosomal_uL1_B"/>
    <property type="match status" value="1"/>
</dbReference>
<dbReference type="InterPro" id="IPR005878">
    <property type="entry name" value="Ribosom_uL1_bac-type"/>
</dbReference>
<dbReference type="InterPro" id="IPR002143">
    <property type="entry name" value="Ribosomal_uL1"/>
</dbReference>
<dbReference type="InterPro" id="IPR023674">
    <property type="entry name" value="Ribosomal_uL1-like"/>
</dbReference>
<dbReference type="InterPro" id="IPR028364">
    <property type="entry name" value="Ribosomal_uL1/biogenesis"/>
</dbReference>
<dbReference type="InterPro" id="IPR016095">
    <property type="entry name" value="Ribosomal_uL1_3-a/b-sand"/>
</dbReference>
<dbReference type="InterPro" id="IPR023673">
    <property type="entry name" value="Ribosomal_uL1_CS"/>
</dbReference>
<dbReference type="NCBIfam" id="TIGR01169">
    <property type="entry name" value="rplA_bact"/>
    <property type="match status" value="1"/>
</dbReference>
<dbReference type="PANTHER" id="PTHR36427">
    <property type="entry name" value="54S RIBOSOMAL PROTEIN L1, MITOCHONDRIAL"/>
    <property type="match status" value="1"/>
</dbReference>
<dbReference type="PANTHER" id="PTHR36427:SF3">
    <property type="entry name" value="LARGE RIBOSOMAL SUBUNIT PROTEIN UL1M"/>
    <property type="match status" value="1"/>
</dbReference>
<dbReference type="Pfam" id="PF00687">
    <property type="entry name" value="Ribosomal_L1"/>
    <property type="match status" value="1"/>
</dbReference>
<dbReference type="PIRSF" id="PIRSF002155">
    <property type="entry name" value="Ribosomal_L1"/>
    <property type="match status" value="1"/>
</dbReference>
<dbReference type="SUPFAM" id="SSF56808">
    <property type="entry name" value="Ribosomal protein L1"/>
    <property type="match status" value="1"/>
</dbReference>
<dbReference type="PROSITE" id="PS01199">
    <property type="entry name" value="RIBOSOMAL_L1"/>
    <property type="match status" value="1"/>
</dbReference>
<proteinExistence type="inferred from homology"/>
<name>RL1_LACCB</name>
<evidence type="ECO:0000255" key="1">
    <source>
        <dbReference type="HAMAP-Rule" id="MF_01318"/>
    </source>
</evidence>
<evidence type="ECO:0000305" key="2"/>